<dbReference type="EC" id="3.5.4.13" evidence="1"/>
<dbReference type="EMBL" id="CP000697">
    <property type="protein sequence ID" value="ABQ30715.1"/>
    <property type="molecule type" value="Genomic_DNA"/>
</dbReference>
<dbReference type="RefSeq" id="WP_007422448.1">
    <property type="nucleotide sequence ID" value="NC_009484.1"/>
</dbReference>
<dbReference type="SMR" id="A5FYN3"/>
<dbReference type="STRING" id="349163.Acry_1507"/>
<dbReference type="KEGG" id="acr:Acry_1507"/>
<dbReference type="eggNOG" id="COG0717">
    <property type="taxonomic scope" value="Bacteria"/>
</dbReference>
<dbReference type="HOGENOM" id="CLU_087476_4_0_5"/>
<dbReference type="UniPathway" id="UPA00610">
    <property type="reaction ID" value="UER00665"/>
</dbReference>
<dbReference type="Proteomes" id="UP000000245">
    <property type="component" value="Chromosome"/>
</dbReference>
<dbReference type="GO" id="GO:0008829">
    <property type="term" value="F:dCTP deaminase activity"/>
    <property type="evidence" value="ECO:0007669"/>
    <property type="project" value="UniProtKB-UniRule"/>
</dbReference>
<dbReference type="GO" id="GO:0000166">
    <property type="term" value="F:nucleotide binding"/>
    <property type="evidence" value="ECO:0007669"/>
    <property type="project" value="UniProtKB-KW"/>
</dbReference>
<dbReference type="GO" id="GO:0006226">
    <property type="term" value="P:dUMP biosynthetic process"/>
    <property type="evidence" value="ECO:0007669"/>
    <property type="project" value="UniProtKB-UniPathway"/>
</dbReference>
<dbReference type="GO" id="GO:0006229">
    <property type="term" value="P:dUTP biosynthetic process"/>
    <property type="evidence" value="ECO:0007669"/>
    <property type="project" value="UniProtKB-UniRule"/>
</dbReference>
<dbReference type="CDD" id="cd07557">
    <property type="entry name" value="trimeric_dUTPase"/>
    <property type="match status" value="1"/>
</dbReference>
<dbReference type="FunFam" id="2.70.40.10:FF:000001">
    <property type="entry name" value="dCTP deaminase"/>
    <property type="match status" value="1"/>
</dbReference>
<dbReference type="Gene3D" id="2.70.40.10">
    <property type="match status" value="1"/>
</dbReference>
<dbReference type="HAMAP" id="MF_00146">
    <property type="entry name" value="dCTP_deaminase"/>
    <property type="match status" value="1"/>
</dbReference>
<dbReference type="InterPro" id="IPR011962">
    <property type="entry name" value="dCTP_deaminase"/>
</dbReference>
<dbReference type="InterPro" id="IPR036157">
    <property type="entry name" value="dUTPase-like_sf"/>
</dbReference>
<dbReference type="InterPro" id="IPR033704">
    <property type="entry name" value="dUTPase_trimeric"/>
</dbReference>
<dbReference type="NCBIfam" id="TIGR02274">
    <property type="entry name" value="dCTP_deam"/>
    <property type="match status" value="1"/>
</dbReference>
<dbReference type="PANTHER" id="PTHR42680">
    <property type="entry name" value="DCTP DEAMINASE"/>
    <property type="match status" value="1"/>
</dbReference>
<dbReference type="PANTHER" id="PTHR42680:SF3">
    <property type="entry name" value="DCTP DEAMINASE"/>
    <property type="match status" value="1"/>
</dbReference>
<dbReference type="Pfam" id="PF22769">
    <property type="entry name" value="DCD"/>
    <property type="match status" value="1"/>
</dbReference>
<dbReference type="SUPFAM" id="SSF51283">
    <property type="entry name" value="dUTPase-like"/>
    <property type="match status" value="1"/>
</dbReference>
<proteinExistence type="inferred from homology"/>
<feature type="chain" id="PRO_1000009670" description="dCTP deaminase">
    <location>
        <begin position="1"/>
        <end position="184"/>
    </location>
</feature>
<feature type="active site" description="Proton donor/acceptor" evidence="1">
    <location>
        <position position="133"/>
    </location>
</feature>
<feature type="binding site" evidence="1">
    <location>
        <begin position="107"/>
        <end position="112"/>
    </location>
    <ligand>
        <name>dCTP</name>
        <dbReference type="ChEBI" id="CHEBI:61481"/>
    </ligand>
</feature>
<feature type="binding site" evidence="1">
    <location>
        <position position="152"/>
    </location>
    <ligand>
        <name>dCTP</name>
        <dbReference type="ChEBI" id="CHEBI:61481"/>
    </ligand>
</feature>
<feature type="binding site" evidence="1">
    <location>
        <position position="166"/>
    </location>
    <ligand>
        <name>dCTP</name>
        <dbReference type="ChEBI" id="CHEBI:61481"/>
    </ligand>
</feature>
<feature type="binding site" evidence="1">
    <location>
        <position position="176"/>
    </location>
    <ligand>
        <name>dCTP</name>
        <dbReference type="ChEBI" id="CHEBI:61481"/>
    </ligand>
</feature>
<keyword id="KW-0378">Hydrolase</keyword>
<keyword id="KW-0546">Nucleotide metabolism</keyword>
<keyword id="KW-0547">Nucleotide-binding</keyword>
<keyword id="KW-1185">Reference proteome</keyword>
<reference key="1">
    <citation type="submission" date="2007-05" db="EMBL/GenBank/DDBJ databases">
        <title>Complete sequence of chromosome of Acidiphilium cryptum JF-5.</title>
        <authorList>
            <consortium name="US DOE Joint Genome Institute"/>
            <person name="Copeland A."/>
            <person name="Lucas S."/>
            <person name="Lapidus A."/>
            <person name="Barry K."/>
            <person name="Detter J.C."/>
            <person name="Glavina del Rio T."/>
            <person name="Hammon N."/>
            <person name="Israni S."/>
            <person name="Dalin E."/>
            <person name="Tice H."/>
            <person name="Pitluck S."/>
            <person name="Sims D."/>
            <person name="Brettin T."/>
            <person name="Bruce D."/>
            <person name="Han C."/>
            <person name="Schmutz J."/>
            <person name="Larimer F."/>
            <person name="Land M."/>
            <person name="Hauser L."/>
            <person name="Kyrpides N."/>
            <person name="Kim E."/>
            <person name="Magnuson T."/>
            <person name="Richardson P."/>
        </authorList>
    </citation>
    <scope>NUCLEOTIDE SEQUENCE [LARGE SCALE GENOMIC DNA]</scope>
    <source>
        <strain>JF-5</strain>
    </source>
</reference>
<comment type="function">
    <text evidence="1">Catalyzes the deamination of dCTP to dUTP.</text>
</comment>
<comment type="catalytic activity">
    <reaction evidence="1">
        <text>dCTP + H2O + H(+) = dUTP + NH4(+)</text>
        <dbReference type="Rhea" id="RHEA:22680"/>
        <dbReference type="ChEBI" id="CHEBI:15377"/>
        <dbReference type="ChEBI" id="CHEBI:15378"/>
        <dbReference type="ChEBI" id="CHEBI:28938"/>
        <dbReference type="ChEBI" id="CHEBI:61481"/>
        <dbReference type="ChEBI" id="CHEBI:61555"/>
        <dbReference type="EC" id="3.5.4.13"/>
    </reaction>
</comment>
<comment type="pathway">
    <text evidence="1">Pyrimidine metabolism; dUMP biosynthesis; dUMP from dCTP (dUTP route): step 1/2.</text>
</comment>
<comment type="subunit">
    <text evidence="1">Homotrimer.</text>
</comment>
<comment type="similarity">
    <text evidence="1">Belongs to the dCTP deaminase family.</text>
</comment>
<gene>
    <name evidence="1" type="primary">dcd</name>
    <name type="ordered locus">Acry_1507</name>
</gene>
<evidence type="ECO:0000255" key="1">
    <source>
        <dbReference type="HAMAP-Rule" id="MF_00146"/>
    </source>
</evidence>
<protein>
    <recommendedName>
        <fullName evidence="1">dCTP deaminase</fullName>
        <ecNumber evidence="1">3.5.4.13</ecNumber>
    </recommendedName>
    <alternativeName>
        <fullName evidence="1">Deoxycytidine triphosphate deaminase</fullName>
    </alternativeName>
</protein>
<organism>
    <name type="scientific">Acidiphilium cryptum (strain JF-5)</name>
    <dbReference type="NCBI Taxonomy" id="349163"/>
    <lineage>
        <taxon>Bacteria</taxon>
        <taxon>Pseudomonadati</taxon>
        <taxon>Pseudomonadota</taxon>
        <taxon>Alphaproteobacteria</taxon>
        <taxon>Acetobacterales</taxon>
        <taxon>Acidocellaceae</taxon>
        <taxon>Acidiphilium</taxon>
    </lineage>
</organism>
<sequence length="184" mass="20454">MPVMPDHWIREQAVSNGMIDPFVETQKRDGVISYGLSSYGYDARVADDFKIFTNVDSAVVDPKNFSSDSFVDRKGPVCIIPPNSFALAHTVEYFRIPRDVLVICLGKSTYARCGIIVNVTPLEPEWEGQVTIEISNTTPLPAKIYANEGICQFLFLQGSAPPETSYADKAGKYMRQRGVSLPRL</sequence>
<name>DCD_ACICJ</name>
<accession>A5FYN3</accession>